<sequence>MMQFQRDLEASLEAVSANAQELLKSLKSRKDVQDLNASLPKDPLDNCDAQTQAARAQLAEAATRILQLSIRPQEYLEHLQNGYQHLTCFRWLVELNILDHLPHSGTISYTDLARKASVPPMQLRSICRMAICNGFLEEPEANQVRHSRISALFARDESYLGWARWMVNYSVPAAYKLSDATRSWGETVAKDQTAFNLGMDVKVPFFDHLRQTPAMKDAFAAYMRNVTSNATWGLQHAVTGFDWASLPRGAKVVDVGGSLGHGSIAIAKEHTHLTFVIQDLPETVAGARKEMAQNDKIEASVKSRITFQEHDFFGPQTVKDADVYFLRMICHDWPDNEAKVILSQIRAALKPGAQIVIMDTILPQPGTISVLQEQQLRIRDLTMMEVFNAKERELEDWSSLMQSAGLEISRVNQPLNSVMGLLTVRSAGQTALSGTNTLTPELVAAVSASTGSADSRPVLIAGAGIAGLCLAQALKKAGIDFRVFERDSHIDARPQGYRLKFEADAAQSLKNILPDDVYEAFELSNAVTAVGETDFNPFNGNIIHSRTGGGLSGKKGLYATFTVDRKAFRTQLMTGIEDKISFGKEIAYYKTDDATSTVNAEFKDGTHVTGSFLAGTDGLHSVVRKTCVPNHRIVDTGAACIYGKTVMTPEFLARFPEKGLRFMTVVSDIAPMLQSCLIGDSPVTLLLEPIRFSEASRARYPELPPDYVYWALIGPKERFGSQEVTSMKNFVSLDQAAEQAAKLSLAVTEEWHPSLRALFELQDTKQASLIRVASTIPDIPSWESHSNVTVLGGSIHPMSPCGGVGANTAIVDADALAKVLVEHGTKPPVNAIAEFGAAMRTRAKRNIWRSEVGSKRMFGQKNLVDCSEFVF</sequence>
<feature type="chain" id="PRO_0000444967" description="Dual O-methyltransferase/FAD-dependent monooxygenase CTB3">
    <location>
        <begin position="1"/>
        <end position="871"/>
    </location>
</feature>
<feature type="region of interest" description="O-methyltransferase" evidence="5">
    <location>
        <begin position="1"/>
        <end position="429"/>
    </location>
</feature>
<feature type="region of interest" description="FAD-dependent monooxygenase" evidence="5">
    <location>
        <begin position="430"/>
        <end position="871"/>
    </location>
</feature>
<feature type="active site" description="Proton acceptor" evidence="3">
    <location>
        <position position="331"/>
    </location>
</feature>
<feature type="binding site" evidence="3">
    <location>
        <position position="279"/>
    </location>
    <ligand>
        <name>S-adenosyl-L-methionine</name>
        <dbReference type="ChEBI" id="CHEBI:59789"/>
    </ligand>
</feature>
<feature type="binding site" evidence="1">
    <location>
        <position position="485"/>
    </location>
    <ligand>
        <name>FAD</name>
        <dbReference type="ChEBI" id="CHEBI:57692"/>
    </ligand>
</feature>
<feature type="binding site" evidence="1">
    <location>
        <position position="569"/>
    </location>
    <ligand>
        <name>FAD</name>
        <dbReference type="ChEBI" id="CHEBI:57692"/>
    </ligand>
</feature>
<feature type="binding site" evidence="1">
    <location>
        <position position="806"/>
    </location>
    <ligand>
        <name>FAD</name>
        <dbReference type="ChEBI" id="CHEBI:57692"/>
    </ligand>
</feature>
<accession>Q2I0M6</accession>
<name>CTB3_CERNC</name>
<proteinExistence type="evidence at protein level"/>
<comment type="function">
    <text evidence="2 4 5 7 8 9 10 11">Dual O-methyltransferase/FAD-dependent monooxygenase; part of the gene cluster that mediates the biosynthesis of cercosporin, a light-activated, non-host-selective toxin (PubMed:15915645, PubMed:17074519, PubMed:26938470). The perylenequinone chromophore of cercosporin absorbs light energy to attain an electronically-activated triplet state and produces active oxygen species such as the hydroxyl radical, superoxide, hydrogen peroxide or singlet oxygen upon reaction with oxygen molecules (PubMed:11701851). These reactive oxygen species cause damage to various cellular components including lipids, proteins and nucleic acids (PubMed:11701851). The first step of cercosporin biosynthesis is performed by the polyketide synthase CTB1 which catalyzes the formation of nor-toralactone (PubMed:23108075, PubMed:26938470). The starter unit acyltransferase (SAT) domain of CTB1 initiates polyketide extension by the selective utilization of acetyl-CoA, which is elongated to the heptaketide in the beta-ketoacyl synthase (KS) domain by successive condensations with six malonyl units introduced by the malonyl acyltransferase (MAT) domain. The product template (PT) domain catalyzes C4-C9 and C2-C11 aldol cyclizations and dehydrations to a trihydroxynaphthalene, which is thought to be delivered to the thioesterase (TE) domain for product release (PubMed:23108075). The bifunctional enzyme CTB3 then methylates nor-toralactone to toralactone before conducting an unusual oxidative aromatic ring opening (PubMed:17074519, PubMed:26938470). The O-methyltransferase CTB2 further methylates the nascent OH-6 of the CBT3 product, blocking further oxidation at this site before the reductase CTB6 reduces the 2-oxopropyl ketone at position C7, giving naphthalene (PubMed:17660442, PubMed:26938470). The FAD-dependent monooxygenase CTB5 in concert with the multicopper oxidase CTB12 are responsible for homodimerization of naphthalene with CTB7 installing the dioxepine moiety, finally producing cercosporin (PubMed:17660442, PubMed:26938470, PubMed:30809363). The fasciclin domain-containing protein CTB11 might act with CTB5 and CTB12 whereas the roles of CTB9 and CTB10 have still to be elucidated (By similarity).</text>
</comment>
<comment type="catalytic activity">
    <reaction evidence="9">
        <text>nor-toralactone + S-adenosyl-L-methionine = toralactone + S-adenosyl-L-homocysteine + H(+)</text>
        <dbReference type="Rhea" id="RHEA:62908"/>
        <dbReference type="ChEBI" id="CHEBI:15378"/>
        <dbReference type="ChEBI" id="CHEBI:57856"/>
        <dbReference type="ChEBI" id="CHEBI:59789"/>
        <dbReference type="ChEBI" id="CHEBI:78029"/>
        <dbReference type="ChEBI" id="CHEBI:146018"/>
    </reaction>
    <physiologicalReaction direction="left-to-right" evidence="9">
        <dbReference type="Rhea" id="RHEA:62909"/>
    </physiologicalReaction>
</comment>
<comment type="catalytic activity">
    <reaction evidence="9">
        <text>toralactone + NADH + O2 + H(+) = 1-(3,4,5-trihydroxy-7-methoxynaphthalen-2-yl)propan-2-one + CO2 + NAD(+)</text>
        <dbReference type="Rhea" id="RHEA:62912"/>
        <dbReference type="ChEBI" id="CHEBI:15378"/>
        <dbReference type="ChEBI" id="CHEBI:15379"/>
        <dbReference type="ChEBI" id="CHEBI:16526"/>
        <dbReference type="ChEBI" id="CHEBI:57540"/>
        <dbReference type="ChEBI" id="CHEBI:57945"/>
        <dbReference type="ChEBI" id="CHEBI:78029"/>
        <dbReference type="ChEBI" id="CHEBI:146020"/>
    </reaction>
    <physiologicalReaction direction="left-to-right" evidence="9">
        <dbReference type="Rhea" id="RHEA:62913"/>
    </physiologicalReaction>
</comment>
<comment type="pathway">
    <text evidence="5 6 9">Mycotoxin biosynthesis.</text>
</comment>
<comment type="induction">
    <text evidence="6">Expression is positively regulated by the cercosporin cluster-specific transcription factor CTB8 (PubMed:17462021). Expression is also affected by nitrogen and carbon sources and pH, and is also controlled by another transcription activator, CRG1, previously shown to regulate cercosporin production and resistance (PubMed:17462021).</text>
</comment>
<comment type="disruption phenotype">
    <text evidence="5 9">Abolishes the production of cercosporin but accumulates the naphthopyrones nor-toralactone and toralactone, as well as the oxidation product of nor-toralactone, naphthoquinone (PubMed:17074519, PubMed:26938470). Adopts a dark yellow-brown coloration, with slight export of pigmented metabolites into the agar (PubMed:26938470).</text>
</comment>
<comment type="similarity">
    <text evidence="14">In the C-terminal section; belongs to the paxM FAD-dependent monooxygenase family.</text>
</comment>
<comment type="similarity">
    <text evidence="14">In the N-terminal section; belongs to the class I-like SAM-binding methyltransferase superfamily. Cation-independent O-methyltransferase family. COMT subfamily.</text>
</comment>
<dbReference type="EC" id="2.1.1.-" evidence="9"/>
<dbReference type="EC" id="1.-.-.-" evidence="9"/>
<dbReference type="EMBL" id="DQ355149">
    <property type="protein sequence ID" value="ABC79591.2"/>
    <property type="molecule type" value="Genomic_DNA"/>
</dbReference>
<dbReference type="SMR" id="Q2I0M6"/>
<dbReference type="PHI-base" id="PHI:1051"/>
<dbReference type="GO" id="GO:0004497">
    <property type="term" value="F:monooxygenase activity"/>
    <property type="evidence" value="ECO:0007669"/>
    <property type="project" value="UniProtKB-KW"/>
</dbReference>
<dbReference type="GO" id="GO:0008171">
    <property type="term" value="F:O-methyltransferase activity"/>
    <property type="evidence" value="ECO:0007669"/>
    <property type="project" value="InterPro"/>
</dbReference>
<dbReference type="GO" id="GO:0032259">
    <property type="term" value="P:methylation"/>
    <property type="evidence" value="ECO:0007669"/>
    <property type="project" value="UniProtKB-KW"/>
</dbReference>
<dbReference type="GO" id="GO:0044550">
    <property type="term" value="P:secondary metabolite biosynthetic process"/>
    <property type="evidence" value="ECO:0007669"/>
    <property type="project" value="UniProtKB-ARBA"/>
</dbReference>
<dbReference type="Gene3D" id="3.50.50.60">
    <property type="entry name" value="FAD/NAD(P)-binding domain"/>
    <property type="match status" value="1"/>
</dbReference>
<dbReference type="Gene3D" id="3.40.50.150">
    <property type="entry name" value="Vaccinia Virus protein VP39"/>
    <property type="match status" value="1"/>
</dbReference>
<dbReference type="Gene3D" id="1.10.10.10">
    <property type="entry name" value="Winged helix-like DNA-binding domain superfamily/Winged helix DNA-binding domain"/>
    <property type="match status" value="1"/>
</dbReference>
<dbReference type="InterPro" id="IPR016461">
    <property type="entry name" value="COMT-like"/>
</dbReference>
<dbReference type="InterPro" id="IPR036188">
    <property type="entry name" value="FAD/NAD-bd_sf"/>
</dbReference>
<dbReference type="InterPro" id="IPR001077">
    <property type="entry name" value="O_MeTrfase_dom"/>
</dbReference>
<dbReference type="InterPro" id="IPR029063">
    <property type="entry name" value="SAM-dependent_MTases_sf"/>
</dbReference>
<dbReference type="InterPro" id="IPR036388">
    <property type="entry name" value="WH-like_DNA-bd_sf"/>
</dbReference>
<dbReference type="InterPro" id="IPR036390">
    <property type="entry name" value="WH_DNA-bd_sf"/>
</dbReference>
<dbReference type="PANTHER" id="PTHR43712:SF19">
    <property type="entry name" value="DUAL O-METHYLTRANSFERASE_FAD-DEPENDENT MONOOXYGENASE ELCB"/>
    <property type="match status" value="1"/>
</dbReference>
<dbReference type="PANTHER" id="PTHR43712">
    <property type="entry name" value="PUTATIVE (AFU_ORTHOLOGUE AFUA_4G14580)-RELATED"/>
    <property type="match status" value="1"/>
</dbReference>
<dbReference type="Pfam" id="PF00891">
    <property type="entry name" value="Methyltransf_2"/>
    <property type="match status" value="1"/>
</dbReference>
<dbReference type="Pfam" id="PF13450">
    <property type="entry name" value="NAD_binding_8"/>
    <property type="match status" value="1"/>
</dbReference>
<dbReference type="PRINTS" id="PR00420">
    <property type="entry name" value="RNGMNOXGNASE"/>
</dbReference>
<dbReference type="SUPFAM" id="SSF51905">
    <property type="entry name" value="FAD/NAD(P)-binding domain"/>
    <property type="match status" value="1"/>
</dbReference>
<dbReference type="SUPFAM" id="SSF53335">
    <property type="entry name" value="S-adenosyl-L-methionine-dependent methyltransferases"/>
    <property type="match status" value="1"/>
</dbReference>
<dbReference type="SUPFAM" id="SSF46785">
    <property type="entry name" value="Winged helix' DNA-binding domain"/>
    <property type="match status" value="1"/>
</dbReference>
<dbReference type="PROSITE" id="PS51683">
    <property type="entry name" value="SAM_OMT_II"/>
    <property type="match status" value="1"/>
</dbReference>
<gene>
    <name evidence="13" type="primary">CTB3</name>
</gene>
<evidence type="ECO:0000250" key="1">
    <source>
        <dbReference type="UniProtKB" id="B8M9J8"/>
    </source>
</evidence>
<evidence type="ECO:0000250" key="2">
    <source>
        <dbReference type="UniProtKB" id="Q0UHZ9"/>
    </source>
</evidence>
<evidence type="ECO:0000255" key="3">
    <source>
        <dbReference type="PROSITE-ProRule" id="PRU01020"/>
    </source>
</evidence>
<evidence type="ECO:0000269" key="4">
    <source>
    </source>
</evidence>
<evidence type="ECO:0000269" key="5">
    <source>
    </source>
</evidence>
<evidence type="ECO:0000269" key="6">
    <source>
    </source>
</evidence>
<evidence type="ECO:0000269" key="7">
    <source>
    </source>
</evidence>
<evidence type="ECO:0000269" key="8">
    <source>
    </source>
</evidence>
<evidence type="ECO:0000269" key="9">
    <source>
    </source>
</evidence>
<evidence type="ECO:0000269" key="10">
    <source>
    </source>
</evidence>
<evidence type="ECO:0000303" key="11">
    <source>
    </source>
</evidence>
<evidence type="ECO:0000303" key="12">
    <source>
    </source>
</evidence>
<evidence type="ECO:0000303" key="13">
    <source>
    </source>
</evidence>
<evidence type="ECO:0000305" key="14"/>
<protein>
    <recommendedName>
        <fullName evidence="12">Dual O-methyltransferase/FAD-dependent monooxygenase CTB3</fullName>
    </recommendedName>
    <alternativeName>
        <fullName evidence="12">Cercosporin toxin biosynthesis cluster protein 3</fullName>
    </alternativeName>
    <domain>
        <recommendedName>
            <fullName evidence="12">O-methyltransferase</fullName>
            <ecNumber evidence="9">2.1.1.-</ecNumber>
        </recommendedName>
    </domain>
    <domain>
        <recommendedName>
            <fullName evidence="12">FAD-dependent monooxygenase</fullName>
            <ecNumber evidence="9">1.-.-.-</ecNumber>
        </recommendedName>
    </domain>
</protein>
<keyword id="KW-0274">FAD</keyword>
<keyword id="KW-0285">Flavoprotein</keyword>
<keyword id="KW-0489">Methyltransferase</keyword>
<keyword id="KW-0503">Monooxygenase</keyword>
<keyword id="KW-0511">Multifunctional enzyme</keyword>
<keyword id="KW-0520">NAD</keyword>
<keyword id="KW-0560">Oxidoreductase</keyword>
<keyword id="KW-0949">S-adenosyl-L-methionine</keyword>
<keyword id="KW-0808">Transferase</keyword>
<reference key="1">
    <citation type="journal article" date="2007" name="Fungal Genet. Biol.">
        <title>The Cercospora nicotianae gene encoding dual O-methyltransferase and FAD-dependent monooxygenase domains mediates cercosporin toxin biosynthesis.</title>
        <authorList>
            <person name="Dekkers K.L."/>
            <person name="You B.J."/>
            <person name="Gowda V.S."/>
            <person name="Liao H.L."/>
            <person name="Lee M.H."/>
            <person name="Bau H.J."/>
            <person name="Ueng P.P."/>
            <person name="Chung K.R."/>
        </authorList>
    </citation>
    <scope>NUCLEOTIDE SEQUENCE [GENOMIC DNA]</scope>
    <scope>FUNCTION</scope>
    <scope>DOMAIN</scope>
    <scope>DISRUPTION PHENOTYPE</scope>
    <scope>INDUCTION</scope>
    <scope>PATHWAY</scope>
</reference>
<reference key="2">
    <citation type="journal article" date="2007" name="Mol. Microbiol.">
        <title>Molecular analysis of the cercosporin biosynthetic gene cluster in Cercospora nicotianae.</title>
        <authorList>
            <person name="Chen H."/>
            <person name="Lee M.H."/>
            <person name="Daub M.E."/>
            <person name="Chung K.R."/>
        </authorList>
    </citation>
    <scope>NUCLEOTIDE SEQUENCE [GENOMIC DNA]</scope>
    <scope>FUNCTION</scope>
    <scope>INDUCTION</scope>
    <scope>PATHWAY</scope>
</reference>
<reference key="3">
    <citation type="journal article" date="2000" name="Annu. Rev. Phytopathol.">
        <title>The photoactivated cercospora toxin cercosporin: contributions to plant disease and fundamental biology.</title>
        <authorList>
            <person name="Daub M.E."/>
            <person name="Ehrenshaft M."/>
        </authorList>
    </citation>
    <scope>REVIEW ON CERCOSPORIN</scope>
</reference>
<reference key="4">
    <citation type="journal article" date="2005" name="Mol. Plant Microbe Interact.">
        <title>The CTB1 gene encoding a fungal polyketide synthase is required for cercosporin biosynthesis and fungal virulence of Cercospora nicotianae.</title>
        <authorList>
            <person name="Choquer M."/>
            <person name="Dekkers K.L."/>
            <person name="Chen H.Q."/>
            <person name="Cao L."/>
            <person name="Ueng P.P."/>
            <person name="Daub M.E."/>
            <person name="Chung K.R."/>
        </authorList>
    </citation>
    <scope>FUNCTION</scope>
</reference>
<reference key="5">
    <citation type="journal article" date="2007" name="Microbiology (Mosc.)">
        <title>Functional characterization of three genes encoding putative oxidoreductases required for cercosporin toxin biosynthesis in the fungus Cercospora nicotianae.</title>
        <authorList>
            <person name="Chen H.Q."/>
            <person name="Lee M.H."/>
            <person name="Chung K.R."/>
        </authorList>
    </citation>
    <scope>FUNCTION</scope>
</reference>
<reference key="6">
    <citation type="journal article" date="2012" name="Chem. Commun. (Camb.)">
        <title>Analysis of the cercosporin polyketide synthase CTB1 reveals a new fungal thioesterase function.</title>
        <authorList>
            <person name="Newman A.G."/>
            <person name="Vagstad A.L."/>
            <person name="Belecki K."/>
            <person name="Scheerer J.R."/>
            <person name="Townsend C.A."/>
        </authorList>
    </citation>
    <scope>FUNCTION</scope>
</reference>
<reference key="7">
    <citation type="journal article" date="2016" name="J. Am. Chem. Soc.">
        <title>Molecular characterization of the cercosporin biosynthetic pathway in the fungal plant pathogen Cercospora nicotianae.</title>
        <authorList>
            <person name="Newman A.G."/>
            <person name="Townsend C.A."/>
        </authorList>
    </citation>
    <scope>FUNCTION</scope>
    <scope>DISRUPTION PHENOTYPE</scope>
    <scope>CATALYTIC ACTIVITY</scope>
    <scope>PATHWAY</scope>
</reference>
<reference key="8">
    <citation type="journal article" date="2019" name="Chem. Sci.">
        <title>Heterologous biosynthesis of elsinochrome A sheds light on the formation of the photosensitive perylenequinone system.</title>
        <authorList>
            <person name="Hu J."/>
            <person name="Sarrami F."/>
            <person name="Li H."/>
            <person name="Zhang G."/>
            <person name="Stubbs K.A."/>
            <person name="Lacey E."/>
            <person name="Stewart S.G."/>
            <person name="Karton A."/>
            <person name="Piggott A.M."/>
            <person name="Chooi Y.H."/>
        </authorList>
    </citation>
    <scope>FUNCTION</scope>
</reference>
<organism>
    <name type="scientific">Cercospora nicotianae</name>
    <name type="common">Barn spot disease fungus</name>
    <dbReference type="NCBI Taxonomy" id="29003"/>
    <lineage>
        <taxon>Eukaryota</taxon>
        <taxon>Fungi</taxon>
        <taxon>Dikarya</taxon>
        <taxon>Ascomycota</taxon>
        <taxon>Pezizomycotina</taxon>
        <taxon>Dothideomycetes</taxon>
        <taxon>Dothideomycetidae</taxon>
        <taxon>Mycosphaerellales</taxon>
        <taxon>Mycosphaerellaceae</taxon>
        <taxon>Cercospora</taxon>
    </lineage>
</organism>